<accession>Q4G3F8</accession>
<dbReference type="EMBL" id="AY675518">
    <property type="protein sequence ID" value="AAU81900.1"/>
    <property type="molecule type" value="Genomic_DNA"/>
</dbReference>
<dbReference type="EMBL" id="AY741371">
    <property type="protein sequence ID" value="AAX13808.1"/>
    <property type="molecule type" value="Genomic_DNA"/>
</dbReference>
<dbReference type="RefSeq" id="YP_277309.1">
    <property type="nucleotide sequence ID" value="NC_007288.1"/>
</dbReference>
<dbReference type="SMR" id="Q4G3F8"/>
<dbReference type="STRING" id="2903.Q4G3F8"/>
<dbReference type="GeneID" id="3562543"/>
<dbReference type="GO" id="GO:0009535">
    <property type="term" value="C:chloroplast thylakoid membrane"/>
    <property type="evidence" value="ECO:0007669"/>
    <property type="project" value="UniProtKB-SubCell"/>
</dbReference>
<dbReference type="GO" id="GO:0045158">
    <property type="term" value="F:electron transporter, transferring electrons within cytochrome b6/f complex of photosystem II activity"/>
    <property type="evidence" value="ECO:0007669"/>
    <property type="project" value="UniProtKB-UniRule"/>
</dbReference>
<dbReference type="GO" id="GO:0046872">
    <property type="term" value="F:metal ion binding"/>
    <property type="evidence" value="ECO:0007669"/>
    <property type="project" value="UniProtKB-KW"/>
</dbReference>
<dbReference type="GO" id="GO:0016491">
    <property type="term" value="F:oxidoreductase activity"/>
    <property type="evidence" value="ECO:0007669"/>
    <property type="project" value="InterPro"/>
</dbReference>
<dbReference type="GO" id="GO:0015979">
    <property type="term" value="P:photosynthesis"/>
    <property type="evidence" value="ECO:0007669"/>
    <property type="project" value="UniProtKB-UniRule"/>
</dbReference>
<dbReference type="GO" id="GO:0022904">
    <property type="term" value="P:respiratory electron transport chain"/>
    <property type="evidence" value="ECO:0007669"/>
    <property type="project" value="InterPro"/>
</dbReference>
<dbReference type="CDD" id="cd00284">
    <property type="entry name" value="Cytochrome_b_N"/>
    <property type="match status" value="1"/>
</dbReference>
<dbReference type="FunFam" id="1.20.810.10:FF:000001">
    <property type="entry name" value="Cytochrome b6"/>
    <property type="match status" value="1"/>
</dbReference>
<dbReference type="Gene3D" id="1.20.810.10">
    <property type="entry name" value="Cytochrome Bc1 Complex, Chain C"/>
    <property type="match status" value="1"/>
</dbReference>
<dbReference type="HAMAP" id="MF_00633">
    <property type="entry name" value="Cytb6_f_cytb6"/>
    <property type="match status" value="1"/>
</dbReference>
<dbReference type="InterPro" id="IPR005797">
    <property type="entry name" value="Cyt_b/b6_N"/>
</dbReference>
<dbReference type="InterPro" id="IPR023530">
    <property type="entry name" value="Cyt_B6_PetB"/>
</dbReference>
<dbReference type="InterPro" id="IPR027387">
    <property type="entry name" value="Cytb/b6-like_sf"/>
</dbReference>
<dbReference type="InterPro" id="IPR048259">
    <property type="entry name" value="Cytochrome_b_N_euk/bac"/>
</dbReference>
<dbReference type="InterPro" id="IPR016174">
    <property type="entry name" value="Di-haem_cyt_TM"/>
</dbReference>
<dbReference type="NCBIfam" id="NF002990">
    <property type="entry name" value="PRK03735.1"/>
    <property type="match status" value="1"/>
</dbReference>
<dbReference type="PANTHER" id="PTHR19271">
    <property type="entry name" value="CYTOCHROME B"/>
    <property type="match status" value="1"/>
</dbReference>
<dbReference type="PANTHER" id="PTHR19271:SF16">
    <property type="entry name" value="CYTOCHROME B"/>
    <property type="match status" value="1"/>
</dbReference>
<dbReference type="Pfam" id="PF00033">
    <property type="entry name" value="Cytochrome_B"/>
    <property type="match status" value="1"/>
</dbReference>
<dbReference type="PIRSF" id="PIRSF000032">
    <property type="entry name" value="Cytochrome_b6"/>
    <property type="match status" value="1"/>
</dbReference>
<dbReference type="SUPFAM" id="SSF81342">
    <property type="entry name" value="Transmembrane di-heme cytochromes"/>
    <property type="match status" value="1"/>
</dbReference>
<dbReference type="PROSITE" id="PS51002">
    <property type="entry name" value="CYTB_NTER"/>
    <property type="match status" value="1"/>
</dbReference>
<comment type="function">
    <text evidence="1">Component of the cytochrome b6-f complex, which mediates electron transfer between photosystem II (PSII) and photosystem I (PSI), cyclic electron flow around PSI, and state transitions.</text>
</comment>
<comment type="cofactor">
    <cofactor evidence="1">
        <name>heme b</name>
        <dbReference type="ChEBI" id="CHEBI:60344"/>
    </cofactor>
    <text evidence="1">Binds 2 heme b groups non-covalently with two histidine residues as axial ligands.</text>
</comment>
<comment type="cofactor">
    <cofactor evidence="1">
        <name>heme c</name>
        <dbReference type="ChEBI" id="CHEBI:61717"/>
    </cofactor>
    <text evidence="1">Binds one heme group covalently by a single cysteine link with no axial amino acid ligand. This heme was named heme ci.</text>
</comment>
<comment type="subunit">
    <text evidence="1">The 4 large subunits of the cytochrome b6-f complex are cytochrome b6, subunit IV (17 kDa polypeptide, PetD), cytochrome f and the Rieske protein, while the 4 small subunits are PetG, PetL, PetM and PetN. The complex functions as a dimer.</text>
</comment>
<comment type="subcellular location">
    <subcellularLocation>
        <location evidence="1">Plastid</location>
        <location evidence="1">Chloroplast thylakoid membrane</location>
        <topology evidence="1">Multi-pass membrane protein</topology>
    </subcellularLocation>
</comment>
<comment type="miscellaneous">
    <text evidence="1">Heme 1 (or BH or b566) is high-potential and absorbs at about 566 nm, and heme 2 (or BL or b562) is low-potential and absorbs at about 562 nm.</text>
</comment>
<comment type="similarity">
    <text evidence="1">Belongs to the cytochrome b family. PetB subfamily.</text>
</comment>
<proteinExistence type="inferred from homology"/>
<gene>
    <name evidence="1" type="primary">petB</name>
</gene>
<protein>
    <recommendedName>
        <fullName evidence="1">Cytochrome b6</fullName>
    </recommendedName>
</protein>
<keyword id="KW-0150">Chloroplast</keyword>
<keyword id="KW-0249">Electron transport</keyword>
<keyword id="KW-0349">Heme</keyword>
<keyword id="KW-0408">Iron</keyword>
<keyword id="KW-0472">Membrane</keyword>
<keyword id="KW-0479">Metal-binding</keyword>
<keyword id="KW-0602">Photosynthesis</keyword>
<keyword id="KW-0934">Plastid</keyword>
<keyword id="KW-0793">Thylakoid</keyword>
<keyword id="KW-0812">Transmembrane</keyword>
<keyword id="KW-1133">Transmembrane helix</keyword>
<keyword id="KW-0813">Transport</keyword>
<organism>
    <name type="scientific">Emiliania huxleyi</name>
    <name type="common">Coccolithophore</name>
    <name type="synonym">Pontosphaera huxleyi</name>
    <dbReference type="NCBI Taxonomy" id="2903"/>
    <lineage>
        <taxon>Eukaryota</taxon>
        <taxon>Haptista</taxon>
        <taxon>Haptophyta</taxon>
        <taxon>Prymnesiophyceae</taxon>
        <taxon>Isochrysidales</taxon>
        <taxon>Noelaerhabdaceae</taxon>
        <taxon>Emiliania</taxon>
    </lineage>
</organism>
<evidence type="ECO:0000255" key="1">
    <source>
        <dbReference type="HAMAP-Rule" id="MF_00633"/>
    </source>
</evidence>
<geneLocation type="chloroplast"/>
<sequence>MSSVYDWFQERLEIQAIADDITSKYVPPHVNIFYCLGGITLTCFIVQVATGFAMTFYYRPTVTEAFASVEYLMTEVNFGWLIRSVHRWSASMMVLNMILHVCRVYLTGGFKKPRELTWVTGVLLASVTVSFGVTGYSLPWDQVGYWACKIVTGVPDAVPIVGGLIVQVLRGGVSVGQSTLTRFYSAHTFVLPVVAAVLMLTHFVMIRKQGISGPL</sequence>
<reference key="1">
    <citation type="journal article" date="2006" name="J. Mol. Evol.">
        <title>Rate variation as a function of gene origin in plastid-derived genes of peridinin-containing dinoflagellates.</title>
        <authorList>
            <person name="Bachvaroff T.R."/>
            <person name="Sanchez-Puerta M.V."/>
            <person name="Delwiche C.F."/>
        </authorList>
    </citation>
    <scope>NUCLEOTIDE SEQUENCE [GENOMIC DNA]</scope>
    <source>
        <strain>CCMP373 / CSIRO-CS-57 / BT6</strain>
    </source>
</reference>
<reference key="2">
    <citation type="journal article" date="2005" name="DNA Res.">
        <title>The complete plastid genome sequence of the haptophyte Emiliania huxleyi: a comparison to other plastid genomes.</title>
        <authorList>
            <person name="Sanchez-Puerta M.V."/>
            <person name="Bachvaroff T.R."/>
            <person name="Delwiche C.F."/>
        </authorList>
    </citation>
    <scope>NUCLEOTIDE SEQUENCE [LARGE SCALE GENOMIC DNA]</scope>
    <source>
        <strain>CCMP373 / CSIRO-CS-57 / BT6</strain>
    </source>
</reference>
<name>CYB6_EMIHU</name>
<feature type="chain" id="PRO_0000275345" description="Cytochrome b6">
    <location>
        <begin position="1"/>
        <end position="215"/>
    </location>
</feature>
<feature type="transmembrane region" description="Helical" evidence="1">
    <location>
        <begin position="32"/>
        <end position="52"/>
    </location>
</feature>
<feature type="transmembrane region" description="Helical" evidence="1">
    <location>
        <begin position="90"/>
        <end position="110"/>
    </location>
</feature>
<feature type="transmembrane region" description="Helical" evidence="1">
    <location>
        <begin position="116"/>
        <end position="136"/>
    </location>
</feature>
<feature type="transmembrane region" description="Helical" evidence="1">
    <location>
        <begin position="186"/>
        <end position="206"/>
    </location>
</feature>
<feature type="binding site" description="covalent" evidence="1">
    <location>
        <position position="35"/>
    </location>
    <ligand>
        <name>heme c</name>
        <dbReference type="ChEBI" id="CHEBI:61717"/>
    </ligand>
</feature>
<feature type="binding site" description="axial binding residue" evidence="1">
    <location>
        <position position="86"/>
    </location>
    <ligand>
        <name>heme b</name>
        <dbReference type="ChEBI" id="CHEBI:60344"/>
        <label>2</label>
    </ligand>
    <ligandPart>
        <name>Fe</name>
        <dbReference type="ChEBI" id="CHEBI:18248"/>
    </ligandPart>
</feature>
<feature type="binding site" description="axial binding residue" evidence="1">
    <location>
        <position position="100"/>
    </location>
    <ligand>
        <name>heme b</name>
        <dbReference type="ChEBI" id="CHEBI:60344"/>
        <label>1</label>
    </ligand>
    <ligandPart>
        <name>Fe</name>
        <dbReference type="ChEBI" id="CHEBI:18248"/>
    </ligandPart>
</feature>
<feature type="binding site" description="axial binding residue" evidence="1">
    <location>
        <position position="187"/>
    </location>
    <ligand>
        <name>heme b</name>
        <dbReference type="ChEBI" id="CHEBI:60344"/>
        <label>2</label>
    </ligand>
    <ligandPart>
        <name>Fe</name>
        <dbReference type="ChEBI" id="CHEBI:18248"/>
    </ligandPart>
</feature>
<feature type="binding site" description="axial binding residue" evidence="1">
    <location>
        <position position="202"/>
    </location>
    <ligand>
        <name>heme b</name>
        <dbReference type="ChEBI" id="CHEBI:60344"/>
        <label>1</label>
    </ligand>
    <ligandPart>
        <name>Fe</name>
        <dbReference type="ChEBI" id="CHEBI:18248"/>
    </ligandPart>
</feature>